<accession>O48582</accession>
<keyword id="KW-0496">Mitochondrion</keyword>
<keyword id="KW-0507">mRNA processing</keyword>
<keyword id="KW-1185">Reference proteome</keyword>
<keyword id="KW-0809">Transit peptide</keyword>
<evidence type="ECO:0000255" key="1"/>
<evidence type="ECO:0000256" key="2">
    <source>
        <dbReference type="SAM" id="MobiDB-lite"/>
    </source>
</evidence>
<evidence type="ECO:0000269" key="3">
    <source>
    </source>
</evidence>
<evidence type="ECO:0000269" key="4">
    <source>
    </source>
</evidence>
<evidence type="ECO:0000269" key="5">
    <source>
    </source>
</evidence>
<evidence type="ECO:0000303" key="6">
    <source>
    </source>
</evidence>
<evidence type="ECO:0000303" key="7">
    <source>
    </source>
</evidence>
<evidence type="ECO:0000305" key="8"/>
<evidence type="ECO:0000312" key="9">
    <source>
        <dbReference type="Araport" id="AT5G44780"/>
    </source>
</evidence>
<evidence type="ECO:0000312" key="10">
    <source>
        <dbReference type="EMBL" id="AAC79143.1"/>
    </source>
</evidence>
<evidence type="ECO:0000312" key="11">
    <source>
        <dbReference type="EMBL" id="BAB08831.1"/>
    </source>
</evidence>
<reference key="1">
    <citation type="journal article" date="1998" name="DNA Res.">
        <title>Structural analysis of Arabidopsis thaliana chromosome 5. VIII. Sequence features of the regions of 1,081,958 bp covered by seventeen physically assigned P1 and TAC clones.</title>
        <authorList>
            <person name="Asamizu E."/>
            <person name="Sato S."/>
            <person name="Kaneko T."/>
            <person name="Nakamura Y."/>
            <person name="Kotani H."/>
            <person name="Miyajima N."/>
            <person name="Tabata S."/>
        </authorList>
    </citation>
    <scope>NUCLEOTIDE SEQUENCE [LARGE SCALE GENOMIC DNA]</scope>
    <source>
        <strain>cv. Columbia</strain>
    </source>
</reference>
<reference key="2">
    <citation type="journal article" date="2000" name="Nature">
        <title>Sequence and analysis of chromosome 5 of the plant Arabidopsis thaliana.</title>
        <authorList>
            <person name="Tabata S."/>
            <person name="Kaneko T."/>
            <person name="Nakamura Y."/>
            <person name="Kotani H."/>
            <person name="Kato T."/>
            <person name="Asamizu E."/>
            <person name="Miyajima N."/>
            <person name="Sasamoto S."/>
            <person name="Kimura T."/>
            <person name="Hosouchi T."/>
            <person name="Kawashima K."/>
            <person name="Kohara M."/>
            <person name="Matsumoto M."/>
            <person name="Matsuno A."/>
            <person name="Muraki A."/>
            <person name="Nakayama S."/>
            <person name="Nakazaki N."/>
            <person name="Naruo K."/>
            <person name="Okumura S."/>
            <person name="Shinpo S."/>
            <person name="Takeuchi C."/>
            <person name="Wada T."/>
            <person name="Watanabe A."/>
            <person name="Yamada M."/>
            <person name="Yasuda M."/>
            <person name="Sato S."/>
            <person name="de la Bastide M."/>
            <person name="Huang E."/>
            <person name="Spiegel L."/>
            <person name="Gnoj L."/>
            <person name="O'Shaughnessy A."/>
            <person name="Preston R."/>
            <person name="Habermann K."/>
            <person name="Murray J."/>
            <person name="Johnson D."/>
            <person name="Rohlfing T."/>
            <person name="Nelson J."/>
            <person name="Stoneking T."/>
            <person name="Pepin K."/>
            <person name="Spieth J."/>
            <person name="Sekhon M."/>
            <person name="Armstrong J."/>
            <person name="Becker M."/>
            <person name="Belter E."/>
            <person name="Cordum H."/>
            <person name="Cordes M."/>
            <person name="Courtney L."/>
            <person name="Courtney W."/>
            <person name="Dante M."/>
            <person name="Du H."/>
            <person name="Edwards J."/>
            <person name="Fryman J."/>
            <person name="Haakensen B."/>
            <person name="Lamar E."/>
            <person name="Latreille P."/>
            <person name="Leonard S."/>
            <person name="Meyer R."/>
            <person name="Mulvaney E."/>
            <person name="Ozersky P."/>
            <person name="Riley A."/>
            <person name="Strowmatt C."/>
            <person name="Wagner-McPherson C."/>
            <person name="Wollam A."/>
            <person name="Yoakum M."/>
            <person name="Bell M."/>
            <person name="Dedhia N."/>
            <person name="Parnell L."/>
            <person name="Shah R."/>
            <person name="Rodriguez M."/>
            <person name="Hoon See L."/>
            <person name="Vil D."/>
            <person name="Baker J."/>
            <person name="Kirchoff K."/>
            <person name="Toth K."/>
            <person name="King L."/>
            <person name="Bahret A."/>
            <person name="Miller B."/>
            <person name="Marra M.A."/>
            <person name="Martienssen R."/>
            <person name="McCombie W.R."/>
            <person name="Wilson R.K."/>
            <person name="Murphy G."/>
            <person name="Bancroft I."/>
            <person name="Volckaert G."/>
            <person name="Wambutt R."/>
            <person name="Duesterhoeft A."/>
            <person name="Stiekema W."/>
            <person name="Pohl T."/>
            <person name="Entian K.-D."/>
            <person name="Terryn N."/>
            <person name="Hartley N."/>
            <person name="Bent E."/>
            <person name="Johnson S."/>
            <person name="Langham S.-A."/>
            <person name="McCullagh B."/>
            <person name="Robben J."/>
            <person name="Grymonprez B."/>
            <person name="Zimmermann W."/>
            <person name="Ramsperger U."/>
            <person name="Wedler H."/>
            <person name="Balke K."/>
            <person name="Wedler E."/>
            <person name="Peters S."/>
            <person name="van Staveren M."/>
            <person name="Dirkse W."/>
            <person name="Mooijman P."/>
            <person name="Klein Lankhorst R."/>
            <person name="Weitzenegger T."/>
            <person name="Bothe G."/>
            <person name="Rose M."/>
            <person name="Hauf J."/>
            <person name="Berneiser S."/>
            <person name="Hempel S."/>
            <person name="Feldpausch M."/>
            <person name="Lamberth S."/>
            <person name="Villarroel R."/>
            <person name="Gielen J."/>
            <person name="Ardiles W."/>
            <person name="Bents O."/>
            <person name="Lemcke K."/>
            <person name="Kolesov G."/>
            <person name="Mayer K.F.X."/>
            <person name="Rudd S."/>
            <person name="Schoof H."/>
            <person name="Schueller C."/>
            <person name="Zaccaria P."/>
            <person name="Mewes H.-W."/>
            <person name="Bevan M."/>
            <person name="Fransz P.F."/>
        </authorList>
    </citation>
    <scope>NUCLEOTIDE SEQUENCE [LARGE SCALE GENOMIC DNA]</scope>
    <source>
        <strain>cv. Columbia</strain>
    </source>
</reference>
<reference key="3">
    <citation type="journal article" date="2017" name="Plant J.">
        <title>Araport11: a complete reannotation of the Arabidopsis thaliana reference genome.</title>
        <authorList>
            <person name="Cheng C.Y."/>
            <person name="Krishnakumar V."/>
            <person name="Chan A.P."/>
            <person name="Thibaud-Nissen F."/>
            <person name="Schobel S."/>
            <person name="Town C.D."/>
        </authorList>
    </citation>
    <scope>GENOME REANNOTATION</scope>
    <source>
        <strain>cv. Columbia</strain>
    </source>
</reference>
<reference key="4">
    <citation type="submission" date="2004-04" db="EMBL/GenBank/DDBJ databases">
        <title>Arabidopsis ORF clones.</title>
        <authorList>
            <person name="Shinn P."/>
            <person name="Chen H."/>
            <person name="Cheuk R.F."/>
            <person name="Kim C.J."/>
            <person name="Carninci P."/>
            <person name="Hayashizaki Y."/>
            <person name="Ishida J."/>
            <person name="Kamiya A."/>
            <person name="Kawai J."/>
            <person name="Narusaka M."/>
            <person name="Sakurai T."/>
            <person name="Satou M."/>
            <person name="Seki M."/>
            <person name="Shinozaki K."/>
            <person name="Ecker J.R."/>
        </authorList>
    </citation>
    <scope>NUCLEOTIDE SEQUENCE [LARGE SCALE MRNA]</scope>
    <source>
        <strain>cv. Columbia</strain>
    </source>
</reference>
<reference key="5">
    <citation type="submission" date="2005-03" db="EMBL/GenBank/DDBJ databases">
        <title>Large-scale analysis of RIKEN Arabidopsis full-length (RAFL) cDNAs.</title>
        <authorList>
            <person name="Totoki Y."/>
            <person name="Seki M."/>
            <person name="Ishida J."/>
            <person name="Nakajima M."/>
            <person name="Enju A."/>
            <person name="Kamiya A."/>
            <person name="Narusaka M."/>
            <person name="Shin-i T."/>
            <person name="Nakagawa M."/>
            <person name="Sakamoto N."/>
            <person name="Oishi K."/>
            <person name="Kohara Y."/>
            <person name="Kobayashi M."/>
            <person name="Toyoda A."/>
            <person name="Sakaki Y."/>
            <person name="Sakurai T."/>
            <person name="Iida K."/>
            <person name="Akiyama K."/>
            <person name="Satou M."/>
            <person name="Toyoda T."/>
            <person name="Konagaya A."/>
            <person name="Carninci P."/>
            <person name="Kawai J."/>
            <person name="Hayashizaki Y."/>
            <person name="Shinozaki K."/>
        </authorList>
    </citation>
    <scope>NUCLEOTIDE SEQUENCE [LARGE SCALE MRNA]</scope>
    <source>
        <strain>cv. Columbia</strain>
    </source>
</reference>
<reference key="6">
    <citation type="journal article" date="2012" name="Proc. Natl. Acad. Sci. U.S.A.">
        <title>Multiple organellar RNA editing factor (MORF) family proteins are required for RNA editing in mitochondria and plastids of plants.</title>
        <authorList>
            <person name="Takenaka M."/>
            <person name="Zehrmann A."/>
            <person name="Verbitskiy D."/>
            <person name="Kugelmann M."/>
            <person name="Hartel B."/>
            <person name="Brennicke A."/>
        </authorList>
    </citation>
    <scope>FUNCTION</scope>
    <scope>GENE FAMILY</scope>
    <scope>NOMENCLATURE</scope>
</reference>
<reference key="7">
    <citation type="journal article" date="2013" name="PLoS Genet.">
        <title>Comprehensive high-resolution analysis of the role of an Arabidopsis gene family in RNA editing.</title>
        <authorList>
            <person name="Bentolila S."/>
            <person name="Oh J."/>
            <person name="Hanson M.R."/>
            <person name="Bukowski R."/>
        </authorList>
    </citation>
    <scope>FUNCTION</scope>
    <scope>GENE FAMILY</scope>
    <scope>DISRUPTION PHENOTYPE</scope>
</reference>
<reference key="8">
    <citation type="journal article" date="2015" name="J. Biol. Chem.">
        <title>Selective homo- and heteromer interactions between the multiple organellar RNA editing factor (MORF) proteins in Arabidopsis thaliana.</title>
        <authorList>
            <person name="Zehrmann A."/>
            <person name="Haertel B."/>
            <person name="Glass F."/>
            <person name="Bayer-Csaszar E."/>
            <person name="Obata T."/>
            <person name="Meyer E."/>
            <person name="Brennicke A."/>
            <person name="Takenaka M."/>
        </authorList>
    </citation>
    <scope>INTERACTION WITH MORF8/RIP1; MORF1/RIP8 AND MORF3/RIP3</scope>
    <scope>SUBCELLULAR LOCATION</scope>
</reference>
<proteinExistence type="evidence at protein level"/>
<sequence>MAMFSHRLRRIVVAAPSYFQRFSTLSRPSDFTPVPSLLPRSVVKQSTAINRSPARLFSTTQYQYDPYTGEDSFMPDNEGCDFNHWLITMNFPKDNLPSREEMISIFEQTCAKGLAISLEEAKKKIYAICTTSYQGFQATMTIGEVEKFRDLPGVQYIIPDSYIDVENKVYGGDKYENGVITPGPVPVPTKEGFDSLKKESKPEQEEAEIILTPPDEGKTSGQVQGQGSLTLPDQRSVKERQGTLALVQGQGQRSGMSILGQGQGEGRRMSIPGQWQSRGQGNSFQGSFKQSQGTLPVRKGQTQISDEIPSFQGNVKQRQEMPIHGQGQAQRSQMPSSQGTLRQGQAQGSQRPSNQVGYNQGQGAQTPPYHQGQGAQTPPYQESPNNYGQGAFVQYNQGPPQGNVVQTTQEKYNQMGQGNYAPQSGGNYSPAQGAGSPRFGYGQGQGGQLLSPYRGNYNQGQGTPLPGQGQEGQPSYQMGFSQGLGAPVPPNQVIPGNYGQWAFVNYNQGPPQGNFLQGPQQNHNQGGQWNYSPQNGGHYGPAQFGQWYPGPPQGQGIQWPQYQLSYNQGQGTPFSGQCRCPNCGMTSYQGYNNQGQGTHIPEQWEGQDYAVLSYQASYNQAHGAQAPPYHGNYNQATPGGYGQGTSANFNQRFPVNPANYNMQNGGNYGPPHGLAGNPGFRQGFSGQGQNQTFQQDDQRNVAGDLRNNNPVDPTETRKPNSRI</sequence>
<feature type="transit peptide" description="Mitochondrion" evidence="1">
    <location>
        <begin position="1"/>
        <end position="64"/>
    </location>
</feature>
<feature type="chain" id="PRO_0000432527" description="Multiple organellar RNA editing factor 4, mitochondrial">
    <location>
        <begin position="65"/>
        <end position="723"/>
    </location>
</feature>
<feature type="region of interest" description="Disordered" evidence="2">
    <location>
        <begin position="180"/>
        <end position="303"/>
    </location>
</feature>
<feature type="region of interest" description="Disordered" evidence="2">
    <location>
        <begin position="318"/>
        <end position="474"/>
    </location>
</feature>
<feature type="region of interest" description="Disordered" evidence="2">
    <location>
        <begin position="663"/>
        <end position="723"/>
    </location>
</feature>
<feature type="compositionally biased region" description="Basic and acidic residues" evidence="2">
    <location>
        <begin position="191"/>
        <end position="204"/>
    </location>
</feature>
<feature type="compositionally biased region" description="Polar residues" evidence="2">
    <location>
        <begin position="219"/>
        <end position="233"/>
    </location>
</feature>
<feature type="compositionally biased region" description="Polar residues" evidence="2">
    <location>
        <begin position="273"/>
        <end position="303"/>
    </location>
</feature>
<feature type="compositionally biased region" description="Polar residues" evidence="2">
    <location>
        <begin position="327"/>
        <end position="365"/>
    </location>
</feature>
<feature type="compositionally biased region" description="Polar residues" evidence="2">
    <location>
        <begin position="373"/>
        <end position="430"/>
    </location>
</feature>
<feature type="compositionally biased region" description="Low complexity" evidence="2">
    <location>
        <begin position="459"/>
        <end position="474"/>
    </location>
</feature>
<feature type="compositionally biased region" description="Low complexity" evidence="2">
    <location>
        <begin position="682"/>
        <end position="695"/>
    </location>
</feature>
<feature type="compositionally biased region" description="Basic and acidic residues" evidence="2">
    <location>
        <begin position="714"/>
        <end position="723"/>
    </location>
</feature>
<organism>
    <name type="scientific">Arabidopsis thaliana</name>
    <name type="common">Mouse-ear cress</name>
    <dbReference type="NCBI Taxonomy" id="3702"/>
    <lineage>
        <taxon>Eukaryota</taxon>
        <taxon>Viridiplantae</taxon>
        <taxon>Streptophyta</taxon>
        <taxon>Embryophyta</taxon>
        <taxon>Tracheophyta</taxon>
        <taxon>Spermatophyta</taxon>
        <taxon>Magnoliopsida</taxon>
        <taxon>eudicotyledons</taxon>
        <taxon>Gunneridae</taxon>
        <taxon>Pentapetalae</taxon>
        <taxon>rosids</taxon>
        <taxon>malvids</taxon>
        <taxon>Brassicales</taxon>
        <taxon>Brassicaceae</taxon>
        <taxon>Camelineae</taxon>
        <taxon>Arabidopsis</taxon>
    </lineage>
</organism>
<gene>
    <name evidence="6" type="primary">MORF4</name>
    <name evidence="7" type="synonym">RIP4</name>
    <name evidence="9" type="ordered locus">At5g44780</name>
    <name evidence="11" type="ORF">K23L20.12</name>
    <name evidence="10" type="ORF">T19K24.11</name>
</gene>
<protein>
    <recommendedName>
        <fullName evidence="8">Multiple organellar RNA editing factor 4, mitochondrial</fullName>
    </recommendedName>
    <alternativeName>
        <fullName evidence="7">RNA editing-interacting protein 4</fullName>
    </alternativeName>
</protein>
<dbReference type="EMBL" id="AB016874">
    <property type="protein sequence ID" value="BAB08831.1"/>
    <property type="molecule type" value="Genomic_DNA"/>
</dbReference>
<dbReference type="EMBL" id="AC002342">
    <property type="protein sequence ID" value="AAC79143.1"/>
    <property type="molecule type" value="Genomic_DNA"/>
</dbReference>
<dbReference type="EMBL" id="CP002688">
    <property type="protein sequence ID" value="AED95160.1"/>
    <property type="molecule type" value="Genomic_DNA"/>
</dbReference>
<dbReference type="EMBL" id="BT012578">
    <property type="protein sequence ID" value="AAS99722.1"/>
    <property type="molecule type" value="mRNA"/>
</dbReference>
<dbReference type="EMBL" id="AK221549">
    <property type="protein sequence ID" value="BAD94930.1"/>
    <property type="molecule type" value="mRNA"/>
</dbReference>
<dbReference type="RefSeq" id="NP_199291.1">
    <property type="nucleotide sequence ID" value="NM_123845.4"/>
</dbReference>
<dbReference type="SMR" id="O48582"/>
<dbReference type="FunCoup" id="O48582">
    <property type="interactions" value="120"/>
</dbReference>
<dbReference type="STRING" id="3702.O48582"/>
<dbReference type="GlyGen" id="O48582">
    <property type="glycosylation" value="1 site"/>
</dbReference>
<dbReference type="iPTMnet" id="O48582"/>
<dbReference type="PaxDb" id="3702-AT5G44780.1"/>
<dbReference type="ProteomicsDB" id="250936"/>
<dbReference type="EnsemblPlants" id="AT5G44780.1">
    <property type="protein sequence ID" value="AT5G44780.1"/>
    <property type="gene ID" value="AT5G44780"/>
</dbReference>
<dbReference type="GeneID" id="834507"/>
<dbReference type="Gramene" id="AT5G44780.1">
    <property type="protein sequence ID" value="AT5G44780.1"/>
    <property type="gene ID" value="AT5G44780"/>
</dbReference>
<dbReference type="KEGG" id="ath:AT5G44780"/>
<dbReference type="Araport" id="AT5G44780"/>
<dbReference type="TAIR" id="AT5G44780">
    <property type="gene designation" value="MORF4"/>
</dbReference>
<dbReference type="eggNOG" id="ENOG502QUVM">
    <property type="taxonomic scope" value="Eukaryota"/>
</dbReference>
<dbReference type="HOGENOM" id="CLU_392989_0_0_1"/>
<dbReference type="InParanoid" id="O48582"/>
<dbReference type="PhylomeDB" id="O48582"/>
<dbReference type="PRO" id="PR:O48582"/>
<dbReference type="Proteomes" id="UP000006548">
    <property type="component" value="Chromosome 5"/>
</dbReference>
<dbReference type="ExpressionAtlas" id="O48582">
    <property type="expression patterns" value="baseline and differential"/>
</dbReference>
<dbReference type="GO" id="GO:0005739">
    <property type="term" value="C:mitochondrion"/>
    <property type="evidence" value="ECO:0007669"/>
    <property type="project" value="UniProtKB-SubCell"/>
</dbReference>
<dbReference type="GO" id="GO:0009536">
    <property type="term" value="C:plastid"/>
    <property type="evidence" value="ECO:0007005"/>
    <property type="project" value="TAIR"/>
</dbReference>
<dbReference type="GO" id="GO:0046983">
    <property type="term" value="F:protein dimerization activity"/>
    <property type="evidence" value="ECO:0000353"/>
    <property type="project" value="TAIR"/>
</dbReference>
<dbReference type="GO" id="GO:0016554">
    <property type="term" value="P:cytidine to uridine editing"/>
    <property type="evidence" value="ECO:0007669"/>
    <property type="project" value="InterPro"/>
</dbReference>
<dbReference type="GO" id="GO:0080156">
    <property type="term" value="P:mitochondrial mRNA modification"/>
    <property type="evidence" value="ECO:0000315"/>
    <property type="project" value="UniProtKB"/>
</dbReference>
<dbReference type="GO" id="GO:0006397">
    <property type="term" value="P:mRNA processing"/>
    <property type="evidence" value="ECO:0007669"/>
    <property type="project" value="UniProtKB-KW"/>
</dbReference>
<dbReference type="InterPro" id="IPR039206">
    <property type="entry name" value="MORF/ORRM1/DAG-like"/>
</dbReference>
<dbReference type="InterPro" id="IPR054059">
    <property type="entry name" value="MORF/ORRM1/DAG-like_MORF"/>
</dbReference>
<dbReference type="PANTHER" id="PTHR31346">
    <property type="entry name" value="MULTIPLE ORGANELLAR RNA EDITING FACTOR 2, CHLOROPLASTIC-RELATED-RELATED"/>
    <property type="match status" value="1"/>
</dbReference>
<dbReference type="PANTHER" id="PTHR31346:SF16">
    <property type="entry name" value="MULTIPLE ORGANELLAR RNA EDITING FACTOR 4, MITOCHONDRIAL"/>
    <property type="match status" value="1"/>
</dbReference>
<dbReference type="Pfam" id="PF21864">
    <property type="entry name" value="MORF_dom"/>
    <property type="match status" value="1"/>
</dbReference>
<name>MORF4_ARATH</name>
<comment type="function">
    <text evidence="3 4">Involved in organellar RNA editing. Required for the processing of few RNA editing site in mitochondria.</text>
</comment>
<comment type="subunit">
    <text evidence="5">Heterodimers with MORF8/RIP1, MORF1/RIP8 and MORF3/RIP3.</text>
</comment>
<comment type="subcellular location">
    <subcellularLocation>
        <location evidence="5">Mitochondrion</location>
    </subcellularLocation>
</comment>
<comment type="disruption phenotype">
    <text evidence="4">No visible phenotype under normal growth conditions.</text>
</comment>
<comment type="similarity">
    <text>Belongs to the MORF family.</text>
</comment>